<keyword id="KW-0378">Hydrolase</keyword>
<keyword id="KW-1185">Reference proteome</keyword>
<organism>
    <name type="scientific">Escherichia coli (strain 55989 / EAEC)</name>
    <dbReference type="NCBI Taxonomy" id="585055"/>
    <lineage>
        <taxon>Bacteria</taxon>
        <taxon>Pseudomonadati</taxon>
        <taxon>Pseudomonadota</taxon>
        <taxon>Gammaproteobacteria</taxon>
        <taxon>Enterobacterales</taxon>
        <taxon>Enterobacteriaceae</taxon>
        <taxon>Escherichia</taxon>
    </lineage>
</organism>
<name>GPPA_ECO55</name>
<accession>B7L8C0</accession>
<gene>
    <name evidence="1" type="primary">gppA</name>
    <name type="ordered locus">EC55989_4250</name>
</gene>
<evidence type="ECO:0000255" key="1">
    <source>
        <dbReference type="HAMAP-Rule" id="MF_01550"/>
    </source>
</evidence>
<reference key="1">
    <citation type="journal article" date="2009" name="PLoS Genet.">
        <title>Organised genome dynamics in the Escherichia coli species results in highly diverse adaptive paths.</title>
        <authorList>
            <person name="Touchon M."/>
            <person name="Hoede C."/>
            <person name="Tenaillon O."/>
            <person name="Barbe V."/>
            <person name="Baeriswyl S."/>
            <person name="Bidet P."/>
            <person name="Bingen E."/>
            <person name="Bonacorsi S."/>
            <person name="Bouchier C."/>
            <person name="Bouvet O."/>
            <person name="Calteau A."/>
            <person name="Chiapello H."/>
            <person name="Clermont O."/>
            <person name="Cruveiller S."/>
            <person name="Danchin A."/>
            <person name="Diard M."/>
            <person name="Dossat C."/>
            <person name="Karoui M.E."/>
            <person name="Frapy E."/>
            <person name="Garry L."/>
            <person name="Ghigo J.M."/>
            <person name="Gilles A.M."/>
            <person name="Johnson J."/>
            <person name="Le Bouguenec C."/>
            <person name="Lescat M."/>
            <person name="Mangenot S."/>
            <person name="Martinez-Jehanne V."/>
            <person name="Matic I."/>
            <person name="Nassif X."/>
            <person name="Oztas S."/>
            <person name="Petit M.A."/>
            <person name="Pichon C."/>
            <person name="Rouy Z."/>
            <person name="Ruf C.S."/>
            <person name="Schneider D."/>
            <person name="Tourret J."/>
            <person name="Vacherie B."/>
            <person name="Vallenet D."/>
            <person name="Medigue C."/>
            <person name="Rocha E.P.C."/>
            <person name="Denamur E."/>
        </authorList>
    </citation>
    <scope>NUCLEOTIDE SEQUENCE [LARGE SCALE GENOMIC DNA]</scope>
    <source>
        <strain>55989 / EAEC</strain>
    </source>
</reference>
<proteinExistence type="inferred from homology"/>
<dbReference type="EC" id="3.6.1.40" evidence="1"/>
<dbReference type="EMBL" id="CU928145">
    <property type="protein sequence ID" value="CAV00882.1"/>
    <property type="molecule type" value="Genomic_DNA"/>
</dbReference>
<dbReference type="RefSeq" id="WP_001384924.1">
    <property type="nucleotide sequence ID" value="NC_011748.1"/>
</dbReference>
<dbReference type="SMR" id="B7L8C0"/>
<dbReference type="KEGG" id="eck:EC55989_4250"/>
<dbReference type="HOGENOM" id="CLU_025908_4_0_6"/>
<dbReference type="UniPathway" id="UPA00908">
    <property type="reaction ID" value="UER00885"/>
</dbReference>
<dbReference type="Proteomes" id="UP000000746">
    <property type="component" value="Chromosome"/>
</dbReference>
<dbReference type="GO" id="GO:0008894">
    <property type="term" value="F:guanosine-5'-triphosphate,3'-diphosphate diphosphatase activity"/>
    <property type="evidence" value="ECO:0007669"/>
    <property type="project" value="UniProtKB-UniRule"/>
</dbReference>
<dbReference type="GO" id="GO:0015974">
    <property type="term" value="P:guanosine pentaphosphate catabolic process"/>
    <property type="evidence" value="ECO:0007669"/>
    <property type="project" value="InterPro"/>
</dbReference>
<dbReference type="GO" id="GO:0015970">
    <property type="term" value="P:guanosine tetraphosphate biosynthetic process"/>
    <property type="evidence" value="ECO:0007669"/>
    <property type="project" value="UniProtKB-UniRule"/>
</dbReference>
<dbReference type="GO" id="GO:0015949">
    <property type="term" value="P:nucleobase-containing small molecule interconversion"/>
    <property type="evidence" value="ECO:0007669"/>
    <property type="project" value="TreeGrafter"/>
</dbReference>
<dbReference type="CDD" id="cd24117">
    <property type="entry name" value="ASKHA_NBD_EcGppA-like"/>
    <property type="match status" value="1"/>
</dbReference>
<dbReference type="FunFam" id="1.10.3210.10:FF:000004">
    <property type="entry name" value="Guanosine-5'-triphosphate,3'-diphosphate pyrophosphatase"/>
    <property type="match status" value="1"/>
</dbReference>
<dbReference type="FunFam" id="3.30.420.150:FF:000001">
    <property type="entry name" value="Guanosine-5'-triphosphate,3'-diphosphate pyrophosphatase"/>
    <property type="match status" value="1"/>
</dbReference>
<dbReference type="FunFam" id="3.30.420.40:FF:000023">
    <property type="entry name" value="Guanosine-5'-triphosphate,3'-diphosphate pyrophosphatase"/>
    <property type="match status" value="1"/>
</dbReference>
<dbReference type="Gene3D" id="3.30.420.40">
    <property type="match status" value="1"/>
</dbReference>
<dbReference type="Gene3D" id="3.30.420.150">
    <property type="entry name" value="Exopolyphosphatase. Domain 2"/>
    <property type="match status" value="1"/>
</dbReference>
<dbReference type="Gene3D" id="1.10.3210.10">
    <property type="entry name" value="Hypothetical protein af1432"/>
    <property type="match status" value="1"/>
</dbReference>
<dbReference type="HAMAP" id="MF_01550">
    <property type="entry name" value="GppA"/>
    <property type="match status" value="1"/>
</dbReference>
<dbReference type="InterPro" id="IPR043129">
    <property type="entry name" value="ATPase_NBD"/>
</dbReference>
<dbReference type="InterPro" id="IPR050273">
    <property type="entry name" value="GppA/Ppx_hydrolase"/>
</dbReference>
<dbReference type="InterPro" id="IPR023709">
    <property type="entry name" value="Guo-5TP_3DP_PyrP"/>
</dbReference>
<dbReference type="InterPro" id="IPR048950">
    <property type="entry name" value="Ppx_GppA_C"/>
</dbReference>
<dbReference type="InterPro" id="IPR003695">
    <property type="entry name" value="Ppx_GppA_N"/>
</dbReference>
<dbReference type="InterPro" id="IPR030673">
    <property type="entry name" value="PyroPPase_GppA_Ppx"/>
</dbReference>
<dbReference type="NCBIfam" id="NF008260">
    <property type="entry name" value="PRK11031.1"/>
    <property type="match status" value="1"/>
</dbReference>
<dbReference type="PANTHER" id="PTHR30005">
    <property type="entry name" value="EXOPOLYPHOSPHATASE"/>
    <property type="match status" value="1"/>
</dbReference>
<dbReference type="PANTHER" id="PTHR30005:SF0">
    <property type="entry name" value="RETROGRADE REGULATION PROTEIN 2"/>
    <property type="match status" value="1"/>
</dbReference>
<dbReference type="Pfam" id="PF02541">
    <property type="entry name" value="Ppx-GppA"/>
    <property type="match status" value="1"/>
</dbReference>
<dbReference type="Pfam" id="PF21447">
    <property type="entry name" value="Ppx-GppA_III"/>
    <property type="match status" value="1"/>
</dbReference>
<dbReference type="PIRSF" id="PIRSF001267">
    <property type="entry name" value="Pyrophosphatase_GppA_Ppx"/>
    <property type="match status" value="1"/>
</dbReference>
<dbReference type="SUPFAM" id="SSF53067">
    <property type="entry name" value="Actin-like ATPase domain"/>
    <property type="match status" value="2"/>
</dbReference>
<dbReference type="SUPFAM" id="SSF109604">
    <property type="entry name" value="HD-domain/PDEase-like"/>
    <property type="match status" value="1"/>
</dbReference>
<feature type="chain" id="PRO_1000185313" description="Guanosine-5'-triphosphate,3'-diphosphate pyrophosphatase">
    <location>
        <begin position="1"/>
        <end position="494"/>
    </location>
</feature>
<protein>
    <recommendedName>
        <fullName evidence="1">Guanosine-5'-triphosphate,3'-diphosphate pyrophosphatase</fullName>
        <ecNumber evidence="1">3.6.1.40</ecNumber>
    </recommendedName>
    <alternativeName>
        <fullName evidence="1">Guanosine pentaphosphate phosphohydrolase</fullName>
    </alternativeName>
    <alternativeName>
        <fullName evidence="1">pppGpp-5'-phosphohydrolase</fullName>
    </alternativeName>
</protein>
<sequence length="494" mass="54897">MGSTSSLYAAIDLGSNSFHMLVVREVAGSIQTLTRIKRKVRLAAGLNSENALSNEAMERGWQCLRLFAERLQDIPPSQIRVVATATLRLAVNAGDFIAKAQEILGCPVQVISGEEEARLIYQGVAHTTGGADQRLVVDIGGASTELVTGTGAQTTSLFSLSMGCVTWLERYFADRNLGQENFDAAEKAAREVLRPVADELRYHGWKVCVGASGTVQALQEIMMAQGMDERITLEKLQQLKQRAIHCGRLEELEIDGLTLERALVFPSGLAILIAIFTELNIQCMTLAGGALREGLVYGMLHLAVEQDIRSRTLRNIQRRFMIDIDQAQRVAKVAANFFDQVENEWYLEAISRDLLISACQLHEIGLSVDFKQAPQHAAYLVRNLDLPGFTPAQKKLLATLLLNQTNPVDLSSLHQQNAVPPRVAEQLCRLLRLAIIFASRRRDDLVPEMTLQANHELLTLTLPQGWLTQHPLGKEIIAQESQWQSYVHWPLEVH</sequence>
<comment type="function">
    <text evidence="1">Catalyzes the conversion of pppGpp to ppGpp. Guanosine pentaphosphate (pppGpp) is a cytoplasmic signaling molecule which together with ppGpp controls the 'stringent response', an adaptive process that allows bacteria to respond to amino acid starvation, resulting in the coordinated regulation of numerous cellular activities.</text>
</comment>
<comment type="catalytic activity">
    <reaction evidence="1">
        <text>guanosine 3'-diphosphate 5'-triphosphate + H2O = guanosine 3',5'-bis(diphosphate) + phosphate + H(+)</text>
        <dbReference type="Rhea" id="RHEA:13073"/>
        <dbReference type="ChEBI" id="CHEBI:15377"/>
        <dbReference type="ChEBI" id="CHEBI:15378"/>
        <dbReference type="ChEBI" id="CHEBI:43474"/>
        <dbReference type="ChEBI" id="CHEBI:77828"/>
        <dbReference type="ChEBI" id="CHEBI:142410"/>
        <dbReference type="EC" id="3.6.1.40"/>
    </reaction>
</comment>
<comment type="pathway">
    <text evidence="1">Purine metabolism; ppGpp biosynthesis; ppGpp from GTP: step 2/2.</text>
</comment>
<comment type="similarity">
    <text evidence="1">Belongs to the GppA/Ppx family. GppA subfamily.</text>
</comment>